<accession>B9M9X6</accession>
<proteinExistence type="inferred from homology"/>
<gene>
    <name evidence="1" type="primary">cas2</name>
    <name type="ordered locus">Dtpsy_0058</name>
</gene>
<feature type="chain" id="PRO_0000417701" description="CRISPR-associated endoribonuclease Cas2">
    <location>
        <begin position="1"/>
        <end position="102"/>
    </location>
</feature>
<feature type="binding site" evidence="1">
    <location>
        <position position="8"/>
    </location>
    <ligand>
        <name>Mg(2+)</name>
        <dbReference type="ChEBI" id="CHEBI:18420"/>
        <note>catalytic</note>
    </ligand>
</feature>
<comment type="function">
    <text evidence="1">CRISPR (clustered regularly interspaced short palindromic repeat), is an adaptive immune system that provides protection against mobile genetic elements (viruses, transposable elements and conjugative plasmids). CRISPR clusters contain sequences complementary to antecedent mobile elements and target invading nucleic acids. CRISPR clusters are transcribed and processed into CRISPR RNA (crRNA). Functions as a ssRNA-specific endoribonuclease. Involved in the integration of spacer DNA into the CRISPR cassette.</text>
</comment>
<comment type="cofactor">
    <cofactor evidence="1">
        <name>Mg(2+)</name>
        <dbReference type="ChEBI" id="CHEBI:18420"/>
    </cofactor>
</comment>
<comment type="subunit">
    <text evidence="1">Homodimer, forms a heterotetramer with a Cas1 homodimer.</text>
</comment>
<comment type="similarity">
    <text evidence="1">Belongs to the CRISPR-associated endoribonuclease Cas2 protein family.</text>
</comment>
<sequence>MRMLVFFDLPVVSKADRRAYTVFRRFLLNDGYDMIQFSVYGRILNGTDAAQKHMQRLLANLPSEGSVRVLTVTEKQFASMKLLVGLPLFQEKKVNAAQIALF</sequence>
<reference key="1">
    <citation type="submission" date="2009-01" db="EMBL/GenBank/DDBJ databases">
        <title>Complete sequence of Diaphorobacter sp. TPSY.</title>
        <authorList>
            <consortium name="US DOE Joint Genome Institute"/>
            <person name="Lucas S."/>
            <person name="Copeland A."/>
            <person name="Lapidus A."/>
            <person name="Glavina del Rio T."/>
            <person name="Tice H."/>
            <person name="Bruce D."/>
            <person name="Goodwin L."/>
            <person name="Pitluck S."/>
            <person name="Chertkov O."/>
            <person name="Brettin T."/>
            <person name="Detter J.C."/>
            <person name="Han C."/>
            <person name="Larimer F."/>
            <person name="Land M."/>
            <person name="Hauser L."/>
            <person name="Kyrpides N."/>
            <person name="Mikhailova N."/>
            <person name="Coates J.D."/>
        </authorList>
    </citation>
    <scope>NUCLEOTIDE SEQUENCE [LARGE SCALE GENOMIC DNA]</scope>
    <source>
        <strain>TPSY</strain>
    </source>
</reference>
<keyword id="KW-0051">Antiviral defense</keyword>
<keyword id="KW-0255">Endonuclease</keyword>
<keyword id="KW-0378">Hydrolase</keyword>
<keyword id="KW-0460">Magnesium</keyword>
<keyword id="KW-0479">Metal-binding</keyword>
<keyword id="KW-0540">Nuclease</keyword>
<keyword id="KW-1185">Reference proteome</keyword>
<organism>
    <name type="scientific">Acidovorax ebreus (strain TPSY)</name>
    <name type="common">Diaphorobacter sp. (strain TPSY)</name>
    <dbReference type="NCBI Taxonomy" id="535289"/>
    <lineage>
        <taxon>Bacteria</taxon>
        <taxon>Pseudomonadati</taxon>
        <taxon>Pseudomonadota</taxon>
        <taxon>Betaproteobacteria</taxon>
        <taxon>Burkholderiales</taxon>
        <taxon>Comamonadaceae</taxon>
        <taxon>Diaphorobacter</taxon>
    </lineage>
</organism>
<dbReference type="EC" id="3.1.-.-" evidence="1"/>
<dbReference type="EMBL" id="CP001392">
    <property type="protein sequence ID" value="ACM31547.1"/>
    <property type="molecule type" value="Genomic_DNA"/>
</dbReference>
<dbReference type="SMR" id="B9M9X6"/>
<dbReference type="KEGG" id="dia:Dtpsy_0058"/>
<dbReference type="eggNOG" id="COG3512">
    <property type="taxonomic scope" value="Bacteria"/>
</dbReference>
<dbReference type="HOGENOM" id="CLU_150500_1_0_4"/>
<dbReference type="Proteomes" id="UP000000450">
    <property type="component" value="Chromosome"/>
</dbReference>
<dbReference type="GO" id="GO:0046872">
    <property type="term" value="F:metal ion binding"/>
    <property type="evidence" value="ECO:0007669"/>
    <property type="project" value="UniProtKB-UniRule"/>
</dbReference>
<dbReference type="GO" id="GO:0004521">
    <property type="term" value="F:RNA endonuclease activity"/>
    <property type="evidence" value="ECO:0007669"/>
    <property type="project" value="InterPro"/>
</dbReference>
<dbReference type="GO" id="GO:0051607">
    <property type="term" value="P:defense response to virus"/>
    <property type="evidence" value="ECO:0007669"/>
    <property type="project" value="UniProtKB-UniRule"/>
</dbReference>
<dbReference type="GO" id="GO:0043571">
    <property type="term" value="P:maintenance of CRISPR repeat elements"/>
    <property type="evidence" value="ECO:0007669"/>
    <property type="project" value="UniProtKB-UniRule"/>
</dbReference>
<dbReference type="CDD" id="cd09638">
    <property type="entry name" value="Cas2_I_II_III"/>
    <property type="match status" value="1"/>
</dbReference>
<dbReference type="HAMAP" id="MF_01471">
    <property type="entry name" value="Cas2"/>
    <property type="match status" value="1"/>
</dbReference>
<dbReference type="InterPro" id="IPR021127">
    <property type="entry name" value="CRISPR_associated_Cas2"/>
</dbReference>
<dbReference type="InterPro" id="IPR019199">
    <property type="entry name" value="Virulence_VapD/CRISPR_Cas2"/>
</dbReference>
<dbReference type="NCBIfam" id="TIGR01573">
    <property type="entry name" value="cas2"/>
    <property type="match status" value="1"/>
</dbReference>
<dbReference type="Pfam" id="PF09827">
    <property type="entry name" value="CRISPR_Cas2"/>
    <property type="match status" value="1"/>
</dbReference>
<dbReference type="SUPFAM" id="SSF143430">
    <property type="entry name" value="TTP0101/SSO1404-like"/>
    <property type="match status" value="1"/>
</dbReference>
<evidence type="ECO:0000255" key="1">
    <source>
        <dbReference type="HAMAP-Rule" id="MF_01471"/>
    </source>
</evidence>
<protein>
    <recommendedName>
        <fullName evidence="1">CRISPR-associated endoribonuclease Cas2</fullName>
        <ecNumber evidence="1">3.1.-.-</ecNumber>
    </recommendedName>
</protein>
<name>CAS2_ACIET</name>